<sequence>MLGSPKLTARQQQILDLIQNAITLTGSPPTRAEIATELGFRSANAAEEHLQALARKGAIELVSGTSRGIRLKSEALRSINESRSKQFPLSLPGLSQLMLPLIGRVAAGSPILAQEHIDQTYYVESSLFQRKPDYLLKVRGMSMRDAGIMDGDLLAVQSTRDAKNGQIVVARLGDEVTVKRFRRTKDLIELCPENPDYQIIVVEPGEPFEIEGLAVGLIRNTMLM</sequence>
<gene>
    <name evidence="1" type="primary">lexA</name>
    <name type="ordered locus">Rfer_2994</name>
</gene>
<proteinExistence type="inferred from homology"/>
<accession>Q21U48</accession>
<feature type="chain" id="PRO_0000322756" description="LexA repressor">
    <location>
        <begin position="1"/>
        <end position="224"/>
    </location>
</feature>
<feature type="DNA-binding region" description="H-T-H motif" evidence="1">
    <location>
        <begin position="31"/>
        <end position="51"/>
    </location>
</feature>
<feature type="active site" description="For autocatalytic cleavage activity" evidence="1">
    <location>
        <position position="142"/>
    </location>
</feature>
<feature type="active site" description="For autocatalytic cleavage activity" evidence="1">
    <location>
        <position position="179"/>
    </location>
</feature>
<feature type="site" description="Cleavage; by autolysis" evidence="1">
    <location>
        <begin position="107"/>
        <end position="108"/>
    </location>
</feature>
<keyword id="KW-0068">Autocatalytic cleavage</keyword>
<keyword id="KW-0227">DNA damage</keyword>
<keyword id="KW-0234">DNA repair</keyword>
<keyword id="KW-0235">DNA replication</keyword>
<keyword id="KW-0238">DNA-binding</keyword>
<keyword id="KW-0378">Hydrolase</keyword>
<keyword id="KW-1185">Reference proteome</keyword>
<keyword id="KW-0678">Repressor</keyword>
<keyword id="KW-0742">SOS response</keyword>
<keyword id="KW-0804">Transcription</keyword>
<keyword id="KW-0805">Transcription regulation</keyword>
<name>LEXA_ALBFT</name>
<comment type="function">
    <text evidence="1">Represses a number of genes involved in the response to DNA damage (SOS response), including recA and lexA. In the presence of single-stranded DNA, RecA interacts with LexA causing an autocatalytic cleavage which disrupts the DNA-binding part of LexA, leading to derepression of the SOS regulon and eventually DNA repair.</text>
</comment>
<comment type="catalytic activity">
    <reaction evidence="1">
        <text>Hydrolysis of Ala-|-Gly bond in repressor LexA.</text>
        <dbReference type="EC" id="3.4.21.88"/>
    </reaction>
</comment>
<comment type="subunit">
    <text evidence="1">Homodimer.</text>
</comment>
<comment type="similarity">
    <text evidence="1">Belongs to the peptidase S24 family.</text>
</comment>
<evidence type="ECO:0000255" key="1">
    <source>
        <dbReference type="HAMAP-Rule" id="MF_00015"/>
    </source>
</evidence>
<reference key="1">
    <citation type="submission" date="2006-02" db="EMBL/GenBank/DDBJ databases">
        <title>Complete sequence of chromosome of Rhodoferax ferrireducens DSM 15236.</title>
        <authorList>
            <person name="Copeland A."/>
            <person name="Lucas S."/>
            <person name="Lapidus A."/>
            <person name="Barry K."/>
            <person name="Detter J.C."/>
            <person name="Glavina del Rio T."/>
            <person name="Hammon N."/>
            <person name="Israni S."/>
            <person name="Pitluck S."/>
            <person name="Brettin T."/>
            <person name="Bruce D."/>
            <person name="Han C."/>
            <person name="Tapia R."/>
            <person name="Gilna P."/>
            <person name="Kiss H."/>
            <person name="Schmutz J."/>
            <person name="Larimer F."/>
            <person name="Land M."/>
            <person name="Kyrpides N."/>
            <person name="Ivanova N."/>
            <person name="Richardson P."/>
        </authorList>
    </citation>
    <scope>NUCLEOTIDE SEQUENCE [LARGE SCALE GENOMIC DNA]</scope>
    <source>
        <strain>ATCC BAA-621 / DSM 15236 / T118</strain>
    </source>
</reference>
<organism>
    <name type="scientific">Albidiferax ferrireducens (strain ATCC BAA-621 / DSM 15236 / T118)</name>
    <name type="common">Rhodoferax ferrireducens</name>
    <dbReference type="NCBI Taxonomy" id="338969"/>
    <lineage>
        <taxon>Bacteria</taxon>
        <taxon>Pseudomonadati</taxon>
        <taxon>Pseudomonadota</taxon>
        <taxon>Betaproteobacteria</taxon>
        <taxon>Burkholderiales</taxon>
        <taxon>Comamonadaceae</taxon>
        <taxon>Rhodoferax</taxon>
    </lineage>
</organism>
<protein>
    <recommendedName>
        <fullName evidence="1">LexA repressor</fullName>
        <ecNumber evidence="1">3.4.21.88</ecNumber>
    </recommendedName>
</protein>
<dbReference type="EC" id="3.4.21.88" evidence="1"/>
<dbReference type="EMBL" id="CP000267">
    <property type="protein sequence ID" value="ABD70705.1"/>
    <property type="molecule type" value="Genomic_DNA"/>
</dbReference>
<dbReference type="RefSeq" id="WP_011465271.1">
    <property type="nucleotide sequence ID" value="NC_007908.1"/>
</dbReference>
<dbReference type="SMR" id="Q21U48"/>
<dbReference type="STRING" id="338969.Rfer_2994"/>
<dbReference type="MEROPS" id="S24.001"/>
<dbReference type="KEGG" id="rfr:Rfer_2994"/>
<dbReference type="eggNOG" id="COG1974">
    <property type="taxonomic scope" value="Bacteria"/>
</dbReference>
<dbReference type="HOGENOM" id="CLU_066192_45_3_4"/>
<dbReference type="OrthoDB" id="9802364at2"/>
<dbReference type="Proteomes" id="UP000008332">
    <property type="component" value="Chromosome"/>
</dbReference>
<dbReference type="GO" id="GO:0003677">
    <property type="term" value="F:DNA binding"/>
    <property type="evidence" value="ECO:0007669"/>
    <property type="project" value="UniProtKB-UniRule"/>
</dbReference>
<dbReference type="GO" id="GO:0004252">
    <property type="term" value="F:serine-type endopeptidase activity"/>
    <property type="evidence" value="ECO:0007669"/>
    <property type="project" value="UniProtKB-UniRule"/>
</dbReference>
<dbReference type="GO" id="GO:0006281">
    <property type="term" value="P:DNA repair"/>
    <property type="evidence" value="ECO:0007669"/>
    <property type="project" value="UniProtKB-UniRule"/>
</dbReference>
<dbReference type="GO" id="GO:0006260">
    <property type="term" value="P:DNA replication"/>
    <property type="evidence" value="ECO:0007669"/>
    <property type="project" value="UniProtKB-UniRule"/>
</dbReference>
<dbReference type="GO" id="GO:0045892">
    <property type="term" value="P:negative regulation of DNA-templated transcription"/>
    <property type="evidence" value="ECO:0007669"/>
    <property type="project" value="UniProtKB-UniRule"/>
</dbReference>
<dbReference type="GO" id="GO:0006508">
    <property type="term" value="P:proteolysis"/>
    <property type="evidence" value="ECO:0007669"/>
    <property type="project" value="InterPro"/>
</dbReference>
<dbReference type="GO" id="GO:0009432">
    <property type="term" value="P:SOS response"/>
    <property type="evidence" value="ECO:0007669"/>
    <property type="project" value="UniProtKB-UniRule"/>
</dbReference>
<dbReference type="CDD" id="cd06529">
    <property type="entry name" value="S24_LexA-like"/>
    <property type="match status" value="1"/>
</dbReference>
<dbReference type="FunFam" id="1.10.10.10:FF:000009">
    <property type="entry name" value="LexA repressor"/>
    <property type="match status" value="1"/>
</dbReference>
<dbReference type="FunFam" id="2.10.109.10:FF:000001">
    <property type="entry name" value="LexA repressor"/>
    <property type="match status" value="1"/>
</dbReference>
<dbReference type="Gene3D" id="2.10.109.10">
    <property type="entry name" value="Umud Fragment, subunit A"/>
    <property type="match status" value="1"/>
</dbReference>
<dbReference type="Gene3D" id="1.10.10.10">
    <property type="entry name" value="Winged helix-like DNA-binding domain superfamily/Winged helix DNA-binding domain"/>
    <property type="match status" value="1"/>
</dbReference>
<dbReference type="HAMAP" id="MF_00015">
    <property type="entry name" value="LexA"/>
    <property type="match status" value="1"/>
</dbReference>
<dbReference type="InterPro" id="IPR006200">
    <property type="entry name" value="LexA"/>
</dbReference>
<dbReference type="InterPro" id="IPR039418">
    <property type="entry name" value="LexA-like"/>
</dbReference>
<dbReference type="InterPro" id="IPR036286">
    <property type="entry name" value="LexA/Signal_pep-like_sf"/>
</dbReference>
<dbReference type="InterPro" id="IPR006199">
    <property type="entry name" value="LexA_DNA-bd_dom"/>
</dbReference>
<dbReference type="InterPro" id="IPR050077">
    <property type="entry name" value="LexA_repressor"/>
</dbReference>
<dbReference type="InterPro" id="IPR006197">
    <property type="entry name" value="Peptidase_S24_LexA"/>
</dbReference>
<dbReference type="InterPro" id="IPR015927">
    <property type="entry name" value="Peptidase_S24_S26A/B/C"/>
</dbReference>
<dbReference type="InterPro" id="IPR036388">
    <property type="entry name" value="WH-like_DNA-bd_sf"/>
</dbReference>
<dbReference type="InterPro" id="IPR036390">
    <property type="entry name" value="WH_DNA-bd_sf"/>
</dbReference>
<dbReference type="NCBIfam" id="TIGR00498">
    <property type="entry name" value="lexA"/>
    <property type="match status" value="1"/>
</dbReference>
<dbReference type="PANTHER" id="PTHR33516">
    <property type="entry name" value="LEXA REPRESSOR"/>
    <property type="match status" value="1"/>
</dbReference>
<dbReference type="PANTHER" id="PTHR33516:SF2">
    <property type="entry name" value="LEXA REPRESSOR-RELATED"/>
    <property type="match status" value="1"/>
</dbReference>
<dbReference type="Pfam" id="PF01726">
    <property type="entry name" value="LexA_DNA_bind"/>
    <property type="match status" value="1"/>
</dbReference>
<dbReference type="Pfam" id="PF00717">
    <property type="entry name" value="Peptidase_S24"/>
    <property type="match status" value="1"/>
</dbReference>
<dbReference type="PRINTS" id="PR00726">
    <property type="entry name" value="LEXASERPTASE"/>
</dbReference>
<dbReference type="SUPFAM" id="SSF51306">
    <property type="entry name" value="LexA/Signal peptidase"/>
    <property type="match status" value="1"/>
</dbReference>
<dbReference type="SUPFAM" id="SSF46785">
    <property type="entry name" value="Winged helix' DNA-binding domain"/>
    <property type="match status" value="1"/>
</dbReference>